<gene>
    <name type="ordered locus">Rv0281</name>
</gene>
<accession>P9WFI9</accession>
<accession>L0T365</accession>
<accession>O53686</accession>
<accession>Q7DA39</accession>
<evidence type="ECO:0000250" key="1"/>
<evidence type="ECO:0000305" key="2"/>
<organism>
    <name type="scientific">Mycobacterium tuberculosis (strain ATCC 25618 / H37Rv)</name>
    <dbReference type="NCBI Taxonomy" id="83332"/>
    <lineage>
        <taxon>Bacteria</taxon>
        <taxon>Bacillati</taxon>
        <taxon>Actinomycetota</taxon>
        <taxon>Actinomycetes</taxon>
        <taxon>Mycobacteriales</taxon>
        <taxon>Mycobacteriaceae</taxon>
        <taxon>Mycobacterium</taxon>
        <taxon>Mycobacterium tuberculosis complex</taxon>
    </lineage>
</organism>
<sequence length="302" mass="32998">MRTEGDSWDITTSVGSTALFVATARALEAQKSDPLVVDPYAEAFCRAVGGSWADVLDGKLPDHKLKSTDFGEHFVNFQGARTKYFDEYFRRAAAAGARQVVILAAGLDSRAYRLPWPDGTTVFELDRPQVLDFKREVLASHGAQPRALRREIAVDLRDDWPQALRDSGFDAAAPSAWIAEGLLIYLPATAQERLFTGIDALAGRRSHVAVEDGAPMGPDEYAAKVEEERAAIAEGAEEHPFFQLVYNERCAPAAEWFGERGWTAVATLLNDYLEAVGRPVPGPESEAGPMFARNTLVSAARV</sequence>
<protein>
    <recommendedName>
        <fullName>Putative S-adenosyl-L-methionine-dependent methyltransferase Rv0281</fullName>
        <ecNumber>2.1.1.-</ecNumber>
    </recommendedName>
</protein>
<name>Y293_MYCTU</name>
<dbReference type="EC" id="2.1.1.-"/>
<dbReference type="EMBL" id="AL123456">
    <property type="protein sequence ID" value="CCP43011.1"/>
    <property type="molecule type" value="Genomic_DNA"/>
</dbReference>
<dbReference type="PIR" id="G70835">
    <property type="entry name" value="G70835"/>
</dbReference>
<dbReference type="RefSeq" id="NP_214795.1">
    <property type="nucleotide sequence ID" value="NC_000962.3"/>
</dbReference>
<dbReference type="RefSeq" id="WP_003401448.1">
    <property type="nucleotide sequence ID" value="NZ_NVQJ01000026.1"/>
</dbReference>
<dbReference type="SMR" id="P9WFI9"/>
<dbReference type="FunCoup" id="P9WFI9">
    <property type="interactions" value="1"/>
</dbReference>
<dbReference type="STRING" id="83332.Rv0281"/>
<dbReference type="PaxDb" id="83332-Rv0281"/>
<dbReference type="DNASU" id="886618"/>
<dbReference type="GeneID" id="886618"/>
<dbReference type="KEGG" id="mtu:Rv0281"/>
<dbReference type="KEGG" id="mtv:RVBD_0281"/>
<dbReference type="TubercuList" id="Rv0281"/>
<dbReference type="eggNOG" id="COG3315">
    <property type="taxonomic scope" value="Bacteria"/>
</dbReference>
<dbReference type="InParanoid" id="P9WFI9"/>
<dbReference type="OrthoDB" id="9806164at2"/>
<dbReference type="PhylomeDB" id="P9WFI9"/>
<dbReference type="Proteomes" id="UP000001584">
    <property type="component" value="Chromosome"/>
</dbReference>
<dbReference type="GO" id="GO:0005886">
    <property type="term" value="C:plasma membrane"/>
    <property type="evidence" value="ECO:0007005"/>
    <property type="project" value="MTBBASE"/>
</dbReference>
<dbReference type="GO" id="GO:0008168">
    <property type="term" value="F:methyltransferase activity"/>
    <property type="evidence" value="ECO:0007669"/>
    <property type="project" value="UniProtKB-KW"/>
</dbReference>
<dbReference type="GO" id="GO:0032259">
    <property type="term" value="P:methylation"/>
    <property type="evidence" value="ECO:0007669"/>
    <property type="project" value="UniProtKB-KW"/>
</dbReference>
<dbReference type="FunFam" id="3.40.50.150:FF:000152">
    <property type="entry name" value="S-adenosyl-L-methionine-dependent methyltransferase"/>
    <property type="match status" value="1"/>
</dbReference>
<dbReference type="Gene3D" id="3.40.50.150">
    <property type="entry name" value="Vaccinia Virus protein VP39"/>
    <property type="match status" value="1"/>
</dbReference>
<dbReference type="InterPro" id="IPR007213">
    <property type="entry name" value="Ppm1/Ppm2/Tcmp"/>
</dbReference>
<dbReference type="InterPro" id="IPR029063">
    <property type="entry name" value="SAM-dependent_MTases_sf"/>
</dbReference>
<dbReference type="InterPro" id="IPR011610">
    <property type="entry name" value="SAM_mthyl_Trfase_ML2640-like"/>
</dbReference>
<dbReference type="NCBIfam" id="TIGR00027">
    <property type="entry name" value="mthyl_TIGR00027"/>
    <property type="match status" value="1"/>
</dbReference>
<dbReference type="PANTHER" id="PTHR43619">
    <property type="entry name" value="S-ADENOSYL-L-METHIONINE-DEPENDENT METHYLTRANSFERASE YKTD-RELATED"/>
    <property type="match status" value="1"/>
</dbReference>
<dbReference type="PANTHER" id="PTHR43619:SF2">
    <property type="entry name" value="S-ADENOSYL-L-METHIONINE-DEPENDENT METHYLTRANSFERASES SUPERFAMILY PROTEIN"/>
    <property type="match status" value="1"/>
</dbReference>
<dbReference type="Pfam" id="PF04072">
    <property type="entry name" value="LCM"/>
    <property type="match status" value="1"/>
</dbReference>
<dbReference type="SUPFAM" id="SSF53335">
    <property type="entry name" value="S-adenosyl-L-methionine-dependent methyltransferases"/>
    <property type="match status" value="1"/>
</dbReference>
<keyword id="KW-0489">Methyltransferase</keyword>
<keyword id="KW-1185">Reference proteome</keyword>
<keyword id="KW-0949">S-adenosyl-L-methionine</keyword>
<keyword id="KW-0808">Transferase</keyword>
<comment type="function">
    <text evidence="1">Exhibits S-adenosyl-L-methionine-dependent methyltransferase activity.</text>
</comment>
<comment type="similarity">
    <text evidence="2">Belongs to the UPF0677 family.</text>
</comment>
<proteinExistence type="evidence at protein level"/>
<feature type="chain" id="PRO_0000361239" description="Putative S-adenosyl-L-methionine-dependent methyltransferase Rv0281">
    <location>
        <begin position="1"/>
        <end position="302"/>
    </location>
</feature>
<feature type="binding site" evidence="1">
    <location>
        <position position="126"/>
    </location>
    <ligand>
        <name>S-adenosyl-L-methionine</name>
        <dbReference type="ChEBI" id="CHEBI:59789"/>
    </ligand>
</feature>
<feature type="binding site" evidence="1">
    <location>
        <begin position="155"/>
        <end position="156"/>
    </location>
    <ligand>
        <name>S-adenosyl-L-methionine</name>
        <dbReference type="ChEBI" id="CHEBI:59789"/>
    </ligand>
</feature>
<reference key="1">
    <citation type="journal article" date="1998" name="Nature">
        <title>Deciphering the biology of Mycobacterium tuberculosis from the complete genome sequence.</title>
        <authorList>
            <person name="Cole S.T."/>
            <person name="Brosch R."/>
            <person name="Parkhill J."/>
            <person name="Garnier T."/>
            <person name="Churcher C.M."/>
            <person name="Harris D.E."/>
            <person name="Gordon S.V."/>
            <person name="Eiglmeier K."/>
            <person name="Gas S."/>
            <person name="Barry C.E. III"/>
            <person name="Tekaia F."/>
            <person name="Badcock K."/>
            <person name="Basham D."/>
            <person name="Brown D."/>
            <person name="Chillingworth T."/>
            <person name="Connor R."/>
            <person name="Davies R.M."/>
            <person name="Devlin K."/>
            <person name="Feltwell T."/>
            <person name="Gentles S."/>
            <person name="Hamlin N."/>
            <person name="Holroyd S."/>
            <person name="Hornsby T."/>
            <person name="Jagels K."/>
            <person name="Krogh A."/>
            <person name="McLean J."/>
            <person name="Moule S."/>
            <person name="Murphy L.D."/>
            <person name="Oliver S."/>
            <person name="Osborne J."/>
            <person name="Quail M.A."/>
            <person name="Rajandream M.A."/>
            <person name="Rogers J."/>
            <person name="Rutter S."/>
            <person name="Seeger K."/>
            <person name="Skelton S."/>
            <person name="Squares S."/>
            <person name="Squares R."/>
            <person name="Sulston J.E."/>
            <person name="Taylor K."/>
            <person name="Whitehead S."/>
            <person name="Barrell B.G."/>
        </authorList>
    </citation>
    <scope>NUCLEOTIDE SEQUENCE [LARGE SCALE GENOMIC DNA]</scope>
    <source>
        <strain>ATCC 25618 / H37Rv</strain>
    </source>
</reference>
<reference key="2">
    <citation type="journal article" date="2011" name="Mol. Cell. Proteomics">
        <title>Proteogenomic analysis of Mycobacterium tuberculosis by high resolution mass spectrometry.</title>
        <authorList>
            <person name="Kelkar D.S."/>
            <person name="Kumar D."/>
            <person name="Kumar P."/>
            <person name="Balakrishnan L."/>
            <person name="Muthusamy B."/>
            <person name="Yadav A.K."/>
            <person name="Shrivastava P."/>
            <person name="Marimuthu A."/>
            <person name="Anand S."/>
            <person name="Sundaram H."/>
            <person name="Kingsbury R."/>
            <person name="Harsha H.C."/>
            <person name="Nair B."/>
            <person name="Prasad T.S."/>
            <person name="Chauhan D.S."/>
            <person name="Katoch K."/>
            <person name="Katoch V.M."/>
            <person name="Kumar P."/>
            <person name="Chaerkady R."/>
            <person name="Ramachandran S."/>
            <person name="Dash D."/>
            <person name="Pandey A."/>
        </authorList>
    </citation>
    <scope>IDENTIFICATION BY MASS SPECTROMETRY [LARGE SCALE ANALYSIS]</scope>
    <source>
        <strain>ATCC 25618 / H37Rv</strain>
    </source>
</reference>